<keyword id="KW-0150">Chloroplast</keyword>
<keyword id="KW-0489">Methyltransferase</keyword>
<keyword id="KW-0934">Plastid</keyword>
<keyword id="KW-1185">Reference proteome</keyword>
<keyword id="KW-0694">RNA-binding</keyword>
<keyword id="KW-0698">rRNA processing</keyword>
<keyword id="KW-0949">S-adenosyl-L-methionine</keyword>
<keyword id="KW-0808">Transferase</keyword>
<keyword id="KW-0809">Transit peptide</keyword>
<name>DIM1C_ARATH</name>
<organism evidence="8">
    <name type="scientific">Arabidopsis thaliana</name>
    <name type="common">Mouse-ear cress</name>
    <dbReference type="NCBI Taxonomy" id="3702"/>
    <lineage>
        <taxon>Eukaryota</taxon>
        <taxon>Viridiplantae</taxon>
        <taxon>Streptophyta</taxon>
        <taxon>Embryophyta</taxon>
        <taxon>Tracheophyta</taxon>
        <taxon>Spermatophyta</taxon>
        <taxon>Magnoliopsida</taxon>
        <taxon>eudicotyledons</taxon>
        <taxon>Gunneridae</taxon>
        <taxon>Pentapetalae</taxon>
        <taxon>rosids</taxon>
        <taxon>malvids</taxon>
        <taxon>Brassicales</taxon>
        <taxon>Brassicaceae</taxon>
        <taxon>Camelineae</taxon>
        <taxon>Arabidopsis</taxon>
    </lineage>
</organism>
<evidence type="ECO:0000255" key="1"/>
<evidence type="ECO:0000255" key="2">
    <source>
        <dbReference type="PROSITE-ProRule" id="PRU01026"/>
    </source>
</evidence>
<evidence type="ECO:0000269" key="3">
    <source>
    </source>
</evidence>
<evidence type="ECO:0000303" key="4">
    <source>
    </source>
</evidence>
<evidence type="ECO:0000305" key="5"/>
<evidence type="ECO:0000305" key="6">
    <source>
    </source>
</evidence>
<evidence type="ECO:0000312" key="7">
    <source>
        <dbReference type="Araport" id="AT1G01860"/>
    </source>
</evidence>
<evidence type="ECO:0000312" key="8">
    <source>
        <dbReference type="EMBL" id="AAC09322.1"/>
    </source>
</evidence>
<evidence type="ECO:0000312" key="9">
    <source>
        <dbReference type="EMBL" id="AAF76480.1"/>
    </source>
</evidence>
<evidence type="ECO:0000312" key="10">
    <source>
        <dbReference type="EMBL" id="AAF78414.1"/>
    </source>
</evidence>
<protein>
    <recommendedName>
        <fullName evidence="5">Ribosomal RNA small subunit methyltransferase, chloroplastic</fullName>
        <ecNumber evidence="5">2.1.1.-</ecNumber>
    </recommendedName>
    <alternativeName>
        <fullName evidence="5">Dimethyladenosine transferase 1C</fullName>
    </alternativeName>
    <alternativeName>
        <fullName evidence="4">Protein PALEFACE 1</fullName>
    </alternativeName>
</protein>
<reference key="1">
    <citation type="journal article" date="1998" name="Plant Cell">
        <title>Chloroplast development at low temperatures requires a homolog of DIM1, a yeast gene encoding the 18S rRNA dimethylase.</title>
        <authorList>
            <person name="Tokuhisa J.G."/>
            <person name="Vijayan P."/>
            <person name="Feldmann K.A."/>
            <person name="Browse J.A."/>
        </authorList>
    </citation>
    <scope>NUCLEOTIDE SEQUENCE [MRNA]</scope>
    <scope>FUNCTION</scope>
    <scope>DISRUPTION PHENOTYPE</scope>
</reference>
<reference key="2">
    <citation type="journal article" date="2000" name="Nature">
        <title>Sequence and analysis of chromosome 1 of the plant Arabidopsis thaliana.</title>
        <authorList>
            <person name="Theologis A."/>
            <person name="Ecker J.R."/>
            <person name="Palm C.J."/>
            <person name="Federspiel N.A."/>
            <person name="Kaul S."/>
            <person name="White O."/>
            <person name="Alonso J."/>
            <person name="Altafi H."/>
            <person name="Araujo R."/>
            <person name="Bowman C.L."/>
            <person name="Brooks S.Y."/>
            <person name="Buehler E."/>
            <person name="Chan A."/>
            <person name="Chao Q."/>
            <person name="Chen H."/>
            <person name="Cheuk R.F."/>
            <person name="Chin C.W."/>
            <person name="Chung M.K."/>
            <person name="Conn L."/>
            <person name="Conway A.B."/>
            <person name="Conway A.R."/>
            <person name="Creasy T.H."/>
            <person name="Dewar K."/>
            <person name="Dunn P."/>
            <person name="Etgu P."/>
            <person name="Feldblyum T.V."/>
            <person name="Feng J.-D."/>
            <person name="Fong B."/>
            <person name="Fujii C.Y."/>
            <person name="Gill J.E."/>
            <person name="Goldsmith A.D."/>
            <person name="Haas B."/>
            <person name="Hansen N.F."/>
            <person name="Hughes B."/>
            <person name="Huizar L."/>
            <person name="Hunter J.L."/>
            <person name="Jenkins J."/>
            <person name="Johnson-Hopson C."/>
            <person name="Khan S."/>
            <person name="Khaykin E."/>
            <person name="Kim C.J."/>
            <person name="Koo H.L."/>
            <person name="Kremenetskaia I."/>
            <person name="Kurtz D.B."/>
            <person name="Kwan A."/>
            <person name="Lam B."/>
            <person name="Langin-Hooper S."/>
            <person name="Lee A."/>
            <person name="Lee J.M."/>
            <person name="Lenz C.A."/>
            <person name="Li J.H."/>
            <person name="Li Y.-P."/>
            <person name="Lin X."/>
            <person name="Liu S.X."/>
            <person name="Liu Z.A."/>
            <person name="Luros J.S."/>
            <person name="Maiti R."/>
            <person name="Marziali A."/>
            <person name="Militscher J."/>
            <person name="Miranda M."/>
            <person name="Nguyen M."/>
            <person name="Nierman W.C."/>
            <person name="Osborne B.I."/>
            <person name="Pai G."/>
            <person name="Peterson J."/>
            <person name="Pham P.K."/>
            <person name="Rizzo M."/>
            <person name="Rooney T."/>
            <person name="Rowley D."/>
            <person name="Sakano H."/>
            <person name="Salzberg S.L."/>
            <person name="Schwartz J.R."/>
            <person name="Shinn P."/>
            <person name="Southwick A.M."/>
            <person name="Sun H."/>
            <person name="Tallon L.J."/>
            <person name="Tambunga G."/>
            <person name="Toriumi M.J."/>
            <person name="Town C.D."/>
            <person name="Utterback T."/>
            <person name="Van Aken S."/>
            <person name="Vaysberg M."/>
            <person name="Vysotskaia V.S."/>
            <person name="Walker M."/>
            <person name="Wu D."/>
            <person name="Yu G."/>
            <person name="Fraser C.M."/>
            <person name="Venter J.C."/>
            <person name="Davis R.W."/>
        </authorList>
    </citation>
    <scope>NUCLEOTIDE SEQUENCE [LARGE SCALE GENOMIC DNA]</scope>
    <source>
        <strain>cv. Columbia</strain>
    </source>
</reference>
<reference key="3">
    <citation type="journal article" date="2017" name="Plant J.">
        <title>Araport11: a complete reannotation of the Arabidopsis thaliana reference genome.</title>
        <authorList>
            <person name="Cheng C.Y."/>
            <person name="Krishnakumar V."/>
            <person name="Chan A.P."/>
            <person name="Thibaud-Nissen F."/>
            <person name="Schobel S."/>
            <person name="Town C.D."/>
        </authorList>
    </citation>
    <scope>GENOME REANNOTATION</scope>
    <source>
        <strain>cv. Columbia</strain>
    </source>
</reference>
<reference key="4">
    <citation type="journal article" date="2002" name="Science">
        <title>Functional annotation of a full-length Arabidopsis cDNA collection.</title>
        <authorList>
            <person name="Seki M."/>
            <person name="Narusaka M."/>
            <person name="Kamiya A."/>
            <person name="Ishida J."/>
            <person name="Satou M."/>
            <person name="Sakurai T."/>
            <person name="Nakajima M."/>
            <person name="Enju A."/>
            <person name="Akiyama K."/>
            <person name="Oono Y."/>
            <person name="Muramatsu M."/>
            <person name="Hayashizaki Y."/>
            <person name="Kawai J."/>
            <person name="Carninci P."/>
            <person name="Itoh M."/>
            <person name="Ishii Y."/>
            <person name="Arakawa T."/>
            <person name="Shibata K."/>
            <person name="Shinagawa A."/>
            <person name="Shinozaki K."/>
        </authorList>
    </citation>
    <scope>NUCLEOTIDE SEQUENCE [LARGE SCALE MRNA]</scope>
    <source>
        <strain>cv. Columbia</strain>
    </source>
</reference>
<reference key="5">
    <citation type="journal article" date="2003" name="Science">
        <title>Empirical analysis of transcriptional activity in the Arabidopsis genome.</title>
        <authorList>
            <person name="Yamada K."/>
            <person name="Lim J."/>
            <person name="Dale J.M."/>
            <person name="Chen H."/>
            <person name="Shinn P."/>
            <person name="Palm C.J."/>
            <person name="Southwick A.M."/>
            <person name="Wu H.C."/>
            <person name="Kim C.J."/>
            <person name="Nguyen M."/>
            <person name="Pham P.K."/>
            <person name="Cheuk R.F."/>
            <person name="Karlin-Newmann G."/>
            <person name="Liu S.X."/>
            <person name="Lam B."/>
            <person name="Sakano H."/>
            <person name="Wu T."/>
            <person name="Yu G."/>
            <person name="Miranda M."/>
            <person name="Quach H.L."/>
            <person name="Tripp M."/>
            <person name="Chang C.H."/>
            <person name="Lee J.M."/>
            <person name="Toriumi M.J."/>
            <person name="Chan M.M."/>
            <person name="Tang C.C."/>
            <person name="Onodera C.S."/>
            <person name="Deng J.M."/>
            <person name="Akiyama K."/>
            <person name="Ansari Y."/>
            <person name="Arakawa T."/>
            <person name="Banh J."/>
            <person name="Banno F."/>
            <person name="Bowser L."/>
            <person name="Brooks S.Y."/>
            <person name="Carninci P."/>
            <person name="Chao Q."/>
            <person name="Choy N."/>
            <person name="Enju A."/>
            <person name="Goldsmith A.D."/>
            <person name="Gurjal M."/>
            <person name="Hansen N.F."/>
            <person name="Hayashizaki Y."/>
            <person name="Johnson-Hopson C."/>
            <person name="Hsuan V.W."/>
            <person name="Iida K."/>
            <person name="Karnes M."/>
            <person name="Khan S."/>
            <person name="Koesema E."/>
            <person name="Ishida J."/>
            <person name="Jiang P.X."/>
            <person name="Jones T."/>
            <person name="Kawai J."/>
            <person name="Kamiya A."/>
            <person name="Meyers C."/>
            <person name="Nakajima M."/>
            <person name="Narusaka M."/>
            <person name="Seki M."/>
            <person name="Sakurai T."/>
            <person name="Satou M."/>
            <person name="Tamse R."/>
            <person name="Vaysberg M."/>
            <person name="Wallender E.K."/>
            <person name="Wong C."/>
            <person name="Yamamura Y."/>
            <person name="Yuan S."/>
            <person name="Shinozaki K."/>
            <person name="Davis R.W."/>
            <person name="Theologis A."/>
            <person name="Ecker J.R."/>
        </authorList>
    </citation>
    <scope>NUCLEOTIDE SEQUENCE [LARGE SCALE MRNA]</scope>
    <source>
        <strain>cv. Columbia</strain>
    </source>
</reference>
<proteinExistence type="evidence at transcript level"/>
<sequence length="343" mass="38023">MMNAVITSATINCNSLSPSWTCGDNSPSKLLLGEISAALSRRRTVKVSCGKSSPDDYHSTLKSLNSRGRFPRKSLGQHYMLNSDINDQLASAADVKEGDFVLEIGPGTGSLTNVLINLGATVLAIEKDPHMVDLVSERFAGSDKFKVLQEDFVKCHIRSHMLSILETRRLSHPDSALAKVVSNLPFNISTDVVKLLLPMGDIFSKVVLLLQDEAALRLVEPALRTSEYRPINILINFYSEPEYNFRVPRENFFPQPKVDAAVVTFKLKHPRDYPDVSSTKNFFSLVNSAFNGKRKMLRKSLQHISSSPDIEKALGVAGLPATSRPEELTLDDFVKLHNVIARE</sequence>
<comment type="function">
    <text evidence="3">Required for methylation of the 3' adenosines in the small subunit of plastid rRNA. Essential for chloroplast biogenesis at low temperatures.</text>
</comment>
<comment type="subcellular location">
    <subcellularLocation>
        <location evidence="6">Plastid</location>
        <location evidence="6">Chloroplast</location>
    </subcellularLocation>
</comment>
<comment type="disruption phenotype">
    <text evidence="3">No visible phenotype when grown at 22 degrees Celsius. Chilling-induced chlorosis and reduced growth at 5 degrees Celsius.</text>
</comment>
<comment type="similarity">
    <text evidence="2">Belongs to the class I-like SAM-binding methyltransferase superfamily. rRNA adenine N(6)-methyltransferase family.</text>
</comment>
<dbReference type="EC" id="2.1.1.-" evidence="5"/>
<dbReference type="EMBL" id="AF051326">
    <property type="protein sequence ID" value="AAC09322.1"/>
    <property type="molecule type" value="mRNA"/>
</dbReference>
<dbReference type="EMBL" id="AC009273">
    <property type="protein sequence ID" value="AAF78414.1"/>
    <property type="molecule type" value="Genomic_DNA"/>
</dbReference>
<dbReference type="EMBL" id="AC020622">
    <property type="protein sequence ID" value="AAF76480.1"/>
    <property type="molecule type" value="Genomic_DNA"/>
</dbReference>
<dbReference type="EMBL" id="CP002684">
    <property type="protein sequence ID" value="AEE27344.1"/>
    <property type="molecule type" value="Genomic_DNA"/>
</dbReference>
<dbReference type="EMBL" id="AK117412">
    <property type="protein sequence ID" value="BAC42078.1"/>
    <property type="molecule type" value="mRNA"/>
</dbReference>
<dbReference type="EMBL" id="BT005097">
    <property type="protein sequence ID" value="AAO50630.1"/>
    <property type="molecule type" value="mRNA"/>
</dbReference>
<dbReference type="PIR" id="D86150">
    <property type="entry name" value="D86150"/>
</dbReference>
<dbReference type="PIR" id="E86150">
    <property type="entry name" value="E86150"/>
</dbReference>
<dbReference type="PIR" id="T51591">
    <property type="entry name" value="T51591"/>
</dbReference>
<dbReference type="RefSeq" id="NP_171690.1">
    <property type="nucleotide sequence ID" value="NM_100068.3"/>
</dbReference>
<dbReference type="SMR" id="O65090"/>
<dbReference type="FunCoup" id="O65090">
    <property type="interactions" value="483"/>
</dbReference>
<dbReference type="STRING" id="3702.O65090"/>
<dbReference type="PaxDb" id="3702-AT1G01860.1"/>
<dbReference type="ProteomicsDB" id="223951"/>
<dbReference type="EnsemblPlants" id="AT1G01860.1">
    <property type="protein sequence ID" value="AT1G01860.1"/>
    <property type="gene ID" value="AT1G01860"/>
</dbReference>
<dbReference type="GeneID" id="839283"/>
<dbReference type="Gramene" id="AT1G01860.1">
    <property type="protein sequence ID" value="AT1G01860.1"/>
    <property type="gene ID" value="AT1G01860"/>
</dbReference>
<dbReference type="KEGG" id="ath:AT1G01860"/>
<dbReference type="Araport" id="AT1G01860"/>
<dbReference type="TAIR" id="AT1G01860">
    <property type="gene designation" value="PFC1"/>
</dbReference>
<dbReference type="eggNOG" id="KOG0820">
    <property type="taxonomic scope" value="Eukaryota"/>
</dbReference>
<dbReference type="HOGENOM" id="CLU_041220_6_0_1"/>
<dbReference type="InParanoid" id="O65090"/>
<dbReference type="OMA" id="RHEHGQN"/>
<dbReference type="OrthoDB" id="74991at2759"/>
<dbReference type="PhylomeDB" id="O65090"/>
<dbReference type="PRO" id="PR:O65090"/>
<dbReference type="Proteomes" id="UP000006548">
    <property type="component" value="Chromosome 1"/>
</dbReference>
<dbReference type="ExpressionAtlas" id="O65090">
    <property type="expression patterns" value="baseline and differential"/>
</dbReference>
<dbReference type="GO" id="GO:0009507">
    <property type="term" value="C:chloroplast"/>
    <property type="evidence" value="ECO:0007669"/>
    <property type="project" value="UniProtKB-SubCell"/>
</dbReference>
<dbReference type="GO" id="GO:0016422">
    <property type="term" value="F:mRNA (2'-O-methyladenosine-N6-)-methyltransferase activity"/>
    <property type="evidence" value="ECO:0000250"/>
    <property type="project" value="TAIR"/>
</dbReference>
<dbReference type="GO" id="GO:0003723">
    <property type="term" value="F:RNA binding"/>
    <property type="evidence" value="ECO:0007669"/>
    <property type="project" value="UniProtKB-KW"/>
</dbReference>
<dbReference type="GO" id="GO:0000179">
    <property type="term" value="F:rRNA (adenine-N6,N6-)-dimethyltransferase activity"/>
    <property type="evidence" value="ECO:0007669"/>
    <property type="project" value="InterPro"/>
</dbReference>
<dbReference type="GO" id="GO:0009409">
    <property type="term" value="P:response to cold"/>
    <property type="evidence" value="ECO:0000315"/>
    <property type="project" value="TAIR"/>
</dbReference>
<dbReference type="CDD" id="cd02440">
    <property type="entry name" value="AdoMet_MTases"/>
    <property type="match status" value="1"/>
</dbReference>
<dbReference type="FunFam" id="1.10.8.100:FF:000001">
    <property type="entry name" value="Ribosomal RNA small subunit methyltransferase A"/>
    <property type="match status" value="1"/>
</dbReference>
<dbReference type="FunFam" id="3.40.50.150:FF:000265">
    <property type="entry name" value="rRNA adenine N(6)-methyltransferase"/>
    <property type="match status" value="1"/>
</dbReference>
<dbReference type="Gene3D" id="1.10.8.100">
    <property type="entry name" value="Ribosomal RNA adenine dimethylase-like, domain 2"/>
    <property type="match status" value="1"/>
</dbReference>
<dbReference type="Gene3D" id="3.40.50.150">
    <property type="entry name" value="Vaccinia Virus protein VP39"/>
    <property type="match status" value="1"/>
</dbReference>
<dbReference type="InterPro" id="IPR001737">
    <property type="entry name" value="KsgA/Erm"/>
</dbReference>
<dbReference type="InterPro" id="IPR023165">
    <property type="entry name" value="rRNA_Ade_diMease-like_C"/>
</dbReference>
<dbReference type="InterPro" id="IPR020596">
    <property type="entry name" value="rRNA_Ade_Mease_Trfase_CS"/>
</dbReference>
<dbReference type="InterPro" id="IPR020598">
    <property type="entry name" value="rRNA_Ade_methylase_Trfase_N"/>
</dbReference>
<dbReference type="InterPro" id="IPR011530">
    <property type="entry name" value="rRNA_adenine_dimethylase"/>
</dbReference>
<dbReference type="InterPro" id="IPR029063">
    <property type="entry name" value="SAM-dependent_MTases_sf"/>
</dbReference>
<dbReference type="NCBIfam" id="TIGR00755">
    <property type="entry name" value="ksgA"/>
    <property type="match status" value="1"/>
</dbReference>
<dbReference type="PANTHER" id="PTHR11727">
    <property type="entry name" value="DIMETHYLADENOSINE TRANSFERASE"/>
    <property type="match status" value="1"/>
</dbReference>
<dbReference type="PANTHER" id="PTHR11727:SF27">
    <property type="entry name" value="RIBOSOMAL RNA SMALL SUBUNIT METHYLTRANSFERASE, CHLOROPLASTIC"/>
    <property type="match status" value="1"/>
</dbReference>
<dbReference type="Pfam" id="PF00398">
    <property type="entry name" value="RrnaAD"/>
    <property type="match status" value="1"/>
</dbReference>
<dbReference type="SMART" id="SM00650">
    <property type="entry name" value="rADc"/>
    <property type="match status" value="1"/>
</dbReference>
<dbReference type="SUPFAM" id="SSF53335">
    <property type="entry name" value="S-adenosyl-L-methionine-dependent methyltransferases"/>
    <property type="match status" value="1"/>
</dbReference>
<dbReference type="PROSITE" id="PS01131">
    <property type="entry name" value="RRNA_A_DIMETH"/>
    <property type="match status" value="1"/>
</dbReference>
<dbReference type="PROSITE" id="PS51689">
    <property type="entry name" value="SAM_RNA_A_N6_MT"/>
    <property type="match status" value="1"/>
</dbReference>
<accession>O65090</accession>
<accession>Q9LPD3</accession>
<accession>Q9LQ70</accession>
<feature type="transit peptide" description="Chloroplast" evidence="1">
    <location>
        <begin position="1"/>
        <end position="48"/>
    </location>
</feature>
<feature type="chain" id="PRO_0000433249" description="Ribosomal RNA small subunit methyltransferase, chloroplastic" evidence="1">
    <location>
        <begin position="49"/>
        <end position="343"/>
    </location>
</feature>
<feature type="binding site" evidence="2">
    <location>
        <position position="78"/>
    </location>
    <ligand>
        <name>S-adenosyl-L-methionine</name>
        <dbReference type="ChEBI" id="CHEBI:59789"/>
    </ligand>
</feature>
<feature type="binding site" evidence="2">
    <location>
        <position position="80"/>
    </location>
    <ligand>
        <name>S-adenosyl-L-methionine</name>
        <dbReference type="ChEBI" id="CHEBI:59789"/>
    </ligand>
</feature>
<feature type="binding site" evidence="2">
    <location>
        <position position="105"/>
    </location>
    <ligand>
        <name>S-adenosyl-L-methionine</name>
        <dbReference type="ChEBI" id="CHEBI:59789"/>
    </ligand>
</feature>
<feature type="binding site" evidence="2">
    <location>
        <position position="126"/>
    </location>
    <ligand>
        <name>S-adenosyl-L-methionine</name>
        <dbReference type="ChEBI" id="CHEBI:59789"/>
    </ligand>
</feature>
<feature type="binding site" evidence="2">
    <location>
        <position position="151"/>
    </location>
    <ligand>
        <name>S-adenosyl-L-methionine</name>
        <dbReference type="ChEBI" id="CHEBI:59789"/>
    </ligand>
</feature>
<feature type="binding site" evidence="2">
    <location>
        <position position="183"/>
    </location>
    <ligand>
        <name>S-adenosyl-L-methionine</name>
        <dbReference type="ChEBI" id="CHEBI:59789"/>
    </ligand>
</feature>
<gene>
    <name evidence="4" type="primary">PFC1</name>
    <name evidence="5" type="synonym">DIM1C</name>
    <name evidence="7" type="ordered locus">At1g01860</name>
    <name evidence="9" type="ORF">F22M8.1</name>
    <name evidence="10" type="ORF">T1N6.27</name>
</gene>